<dbReference type="EC" id="5.1.1.8" evidence="2"/>
<dbReference type="EMBL" id="CU459141">
    <property type="protein sequence ID" value="CAM87235.1"/>
    <property type="molecule type" value="Genomic_DNA"/>
</dbReference>
<dbReference type="RefSeq" id="WP_000859578.1">
    <property type="nucleotide sequence ID" value="NZ_JBDGFB010000032.1"/>
</dbReference>
<dbReference type="SMR" id="B0VB44"/>
<dbReference type="EnsemblBacteria" id="CAM87235">
    <property type="protein sequence ID" value="CAM87235"/>
    <property type="gene ID" value="ABAYE2385"/>
</dbReference>
<dbReference type="KEGG" id="aby:ABAYE2385"/>
<dbReference type="HOGENOM" id="CLU_036729_1_0_6"/>
<dbReference type="GO" id="GO:0047580">
    <property type="term" value="F:4-hydroxyproline epimerase activity"/>
    <property type="evidence" value="ECO:0007669"/>
    <property type="project" value="UniProtKB-EC"/>
</dbReference>
<dbReference type="FunFam" id="3.10.310.10:FF:000012">
    <property type="entry name" value="4-hydroxyproline 2-epimerase"/>
    <property type="match status" value="1"/>
</dbReference>
<dbReference type="Gene3D" id="3.10.310.10">
    <property type="entry name" value="Diaminopimelate Epimerase, Chain A, domain 1"/>
    <property type="match status" value="2"/>
</dbReference>
<dbReference type="InterPro" id="IPR008794">
    <property type="entry name" value="Pro_racemase_fam"/>
</dbReference>
<dbReference type="NCBIfam" id="NF010577">
    <property type="entry name" value="PRK13970.1"/>
    <property type="match status" value="1"/>
</dbReference>
<dbReference type="PANTHER" id="PTHR33442">
    <property type="entry name" value="TRANS-3-HYDROXY-L-PROLINE DEHYDRATASE"/>
    <property type="match status" value="1"/>
</dbReference>
<dbReference type="PANTHER" id="PTHR33442:SF1">
    <property type="entry name" value="TRANS-3-HYDROXY-L-PROLINE DEHYDRATASE"/>
    <property type="match status" value="1"/>
</dbReference>
<dbReference type="Pfam" id="PF05544">
    <property type="entry name" value="Pro_racemase"/>
    <property type="match status" value="1"/>
</dbReference>
<dbReference type="PIRSF" id="PIRSF029792">
    <property type="entry name" value="Pro_racemase"/>
    <property type="match status" value="1"/>
</dbReference>
<dbReference type="SFLD" id="SFLDS00028">
    <property type="entry name" value="Proline_Racemase"/>
    <property type="match status" value="1"/>
</dbReference>
<dbReference type="SUPFAM" id="SSF54506">
    <property type="entry name" value="Diaminopimelate epimerase-like"/>
    <property type="match status" value="1"/>
</dbReference>
<gene>
    <name evidence="5" type="ordered locus">ABAYE2385</name>
</gene>
<organism>
    <name type="scientific">Acinetobacter baumannii (strain AYE)</name>
    <dbReference type="NCBI Taxonomy" id="509173"/>
    <lineage>
        <taxon>Bacteria</taxon>
        <taxon>Pseudomonadati</taxon>
        <taxon>Pseudomonadota</taxon>
        <taxon>Gammaproteobacteria</taxon>
        <taxon>Moraxellales</taxon>
        <taxon>Moraxellaceae</taxon>
        <taxon>Acinetobacter</taxon>
        <taxon>Acinetobacter calcoaceticus/baumannii complex</taxon>
    </lineage>
</organism>
<feature type="chain" id="PRO_0000432286" description="4-hydroxyproline 2-epimerase">
    <location>
        <begin position="1"/>
        <end position="310"/>
    </location>
</feature>
<feature type="active site" description="Proton acceptor" evidence="1">
    <location>
        <position position="88"/>
    </location>
</feature>
<feature type="active site" description="Proton donor" evidence="1">
    <location>
        <position position="236"/>
    </location>
</feature>
<feature type="binding site" evidence="1">
    <location>
        <begin position="89"/>
        <end position="90"/>
    </location>
    <ligand>
        <name>substrate</name>
    </ligand>
</feature>
<feature type="binding site" evidence="1">
    <location>
        <position position="208"/>
    </location>
    <ligand>
        <name>substrate</name>
    </ligand>
</feature>
<feature type="binding site" evidence="1">
    <location>
        <position position="232"/>
    </location>
    <ligand>
        <name>substrate</name>
    </ligand>
</feature>
<feature type="binding site" evidence="1">
    <location>
        <begin position="237"/>
        <end position="238"/>
    </location>
    <ligand>
        <name>substrate</name>
    </ligand>
</feature>
<sequence>MKTVKILDSHTGGEPTRLVLEGFPDLGTGDIESRRKILSEQYDHFRRATMLEPRGNDVLVGALLCKPVNPKASAGVIFFNNTGYLGMCGHGTIGLVASLAHLGKIQVGTHLIETPVGDVEATLHEDHSVSVRNVPAYRYKKAVEVNVEKYGKVTGDIAWGGNWFFLINDHGQRVASDNLDQLTEYAWTVRQALTAQGITGKDGQEIDHIELFASDTEADSKNFVLCPGKAYDRSPCGTGTSAKIACLAADGKLEPGKLWKQASIIGSQFIASYEQAGEYVIPTIRGEAYMSAEATLFMDENDPFAWGIQL</sequence>
<proteinExistence type="evidence at protein level"/>
<reference key="1">
    <citation type="journal article" date="2008" name="PLoS ONE">
        <title>Comparative analysis of Acinetobacters: three genomes for three lifestyles.</title>
        <authorList>
            <person name="Vallenet D."/>
            <person name="Nordmann P."/>
            <person name="Barbe V."/>
            <person name="Poirel L."/>
            <person name="Mangenot S."/>
            <person name="Bataille E."/>
            <person name="Dossat C."/>
            <person name="Gas S."/>
            <person name="Kreimeyer A."/>
            <person name="Lenoble P."/>
            <person name="Oztas S."/>
            <person name="Poulain J."/>
            <person name="Segurens B."/>
            <person name="Robert C."/>
            <person name="Abergel C."/>
            <person name="Claverie J.-M."/>
            <person name="Raoult D."/>
            <person name="Medigue C."/>
            <person name="Weissenbach J."/>
            <person name="Cruveiller S."/>
        </authorList>
    </citation>
    <scope>NUCLEOTIDE SEQUENCE [LARGE SCALE GENOMIC DNA]</scope>
    <source>
        <strain>AYE</strain>
    </source>
</reference>
<reference key="2">
    <citation type="journal article" date="2014" name="Elife">
        <title>Prediction and characterization of enzymatic activities guided by sequence similarity and genome neighborhood networks.</title>
        <authorList>
            <person name="Zhao S."/>
            <person name="Sakai A."/>
            <person name="Zhang X."/>
            <person name="Vetting M.W."/>
            <person name="Kumar R."/>
            <person name="Hillerich B."/>
            <person name="San Francisco B."/>
            <person name="Solbiati J."/>
            <person name="Steves A."/>
            <person name="Brown S."/>
            <person name="Akiva E."/>
            <person name="Barber A."/>
            <person name="Seidel R.D."/>
            <person name="Babbitt P.C."/>
            <person name="Almo S.C."/>
            <person name="Gerlt J.A."/>
            <person name="Jacobson M.P."/>
        </authorList>
    </citation>
    <scope>FUNCTION</scope>
    <scope>CATALYTIC ACTIVITY</scope>
</reference>
<name>4HYPE_ACIBY</name>
<evidence type="ECO:0000250" key="1">
    <source>
        <dbReference type="UniProtKB" id="Q4KGU2"/>
    </source>
</evidence>
<evidence type="ECO:0000269" key="2">
    <source>
    </source>
</evidence>
<evidence type="ECO:0000303" key="3">
    <source>
    </source>
</evidence>
<evidence type="ECO:0000305" key="4"/>
<evidence type="ECO:0000312" key="5">
    <source>
        <dbReference type="EMBL" id="CAM87235.1"/>
    </source>
</evidence>
<comment type="function">
    <text evidence="2">Catalyzes the epimerization of trans-4-hydroxy-L-proline (t4LHyp) to cis-4-hydroxy-D-proline (c4DHyp). Is likely involved in a degradation pathway that converts t4LHyp to alpha-ketoglutarate. Displays no proline racemase activity.</text>
</comment>
<comment type="catalytic activity">
    <reaction evidence="2">
        <text>trans-4-hydroxy-L-proline = cis-4-hydroxy-D-proline</text>
        <dbReference type="Rhea" id="RHEA:21152"/>
        <dbReference type="ChEBI" id="CHEBI:57690"/>
        <dbReference type="ChEBI" id="CHEBI:58375"/>
        <dbReference type="EC" id="5.1.1.8"/>
    </reaction>
</comment>
<comment type="similarity">
    <text evidence="4">Belongs to the proline racemase family.</text>
</comment>
<keyword id="KW-0413">Isomerase</keyword>
<protein>
    <recommendedName>
        <fullName evidence="3">4-hydroxyproline 2-epimerase</fullName>
        <shortName>4Hyp 2-epimerase</shortName>
        <shortName evidence="3">4HypE</shortName>
        <ecNumber evidence="2">5.1.1.8</ecNumber>
    </recommendedName>
</protein>
<accession>B0VB44</accession>